<organism>
    <name type="scientific">Actinobacillus succinogenes (strain ATCC 55618 / DSM 22257 / CCUG 43843 / 130Z)</name>
    <dbReference type="NCBI Taxonomy" id="339671"/>
    <lineage>
        <taxon>Bacteria</taxon>
        <taxon>Pseudomonadati</taxon>
        <taxon>Pseudomonadota</taxon>
        <taxon>Gammaproteobacteria</taxon>
        <taxon>Pasteurellales</taxon>
        <taxon>Pasteurellaceae</taxon>
        <taxon>Actinobacillus</taxon>
    </lineage>
</organism>
<dbReference type="EC" id="2.7.1.167" evidence="1"/>
<dbReference type="EC" id="2.7.7.70" evidence="1"/>
<dbReference type="EMBL" id="CP000746">
    <property type="protein sequence ID" value="ABR74703.1"/>
    <property type="molecule type" value="Genomic_DNA"/>
</dbReference>
<dbReference type="RefSeq" id="WP_012073080.1">
    <property type="nucleotide sequence ID" value="NC_009655.1"/>
</dbReference>
<dbReference type="SMR" id="A6VP06"/>
<dbReference type="STRING" id="339671.Asuc_1343"/>
<dbReference type="KEGG" id="asu:Asuc_1343"/>
<dbReference type="eggNOG" id="COG0615">
    <property type="taxonomic scope" value="Bacteria"/>
</dbReference>
<dbReference type="eggNOG" id="COG2870">
    <property type="taxonomic scope" value="Bacteria"/>
</dbReference>
<dbReference type="HOGENOM" id="CLU_021150_2_1_6"/>
<dbReference type="OrthoDB" id="9802794at2"/>
<dbReference type="UniPathway" id="UPA00356">
    <property type="reaction ID" value="UER00437"/>
</dbReference>
<dbReference type="UniPathway" id="UPA00356">
    <property type="reaction ID" value="UER00439"/>
</dbReference>
<dbReference type="Proteomes" id="UP000001114">
    <property type="component" value="Chromosome"/>
</dbReference>
<dbReference type="GO" id="GO:0005829">
    <property type="term" value="C:cytosol"/>
    <property type="evidence" value="ECO:0007669"/>
    <property type="project" value="TreeGrafter"/>
</dbReference>
<dbReference type="GO" id="GO:0005524">
    <property type="term" value="F:ATP binding"/>
    <property type="evidence" value="ECO:0007669"/>
    <property type="project" value="UniProtKB-UniRule"/>
</dbReference>
<dbReference type="GO" id="GO:0033785">
    <property type="term" value="F:heptose 7-phosphate kinase activity"/>
    <property type="evidence" value="ECO:0007669"/>
    <property type="project" value="UniProtKB-UniRule"/>
</dbReference>
<dbReference type="GO" id="GO:0033786">
    <property type="term" value="F:heptose-1-phosphate adenylyltransferase activity"/>
    <property type="evidence" value="ECO:0007669"/>
    <property type="project" value="UniProtKB-UniRule"/>
</dbReference>
<dbReference type="GO" id="GO:0016773">
    <property type="term" value="F:phosphotransferase activity, alcohol group as acceptor"/>
    <property type="evidence" value="ECO:0007669"/>
    <property type="project" value="InterPro"/>
</dbReference>
<dbReference type="GO" id="GO:0097171">
    <property type="term" value="P:ADP-L-glycero-beta-D-manno-heptose biosynthetic process"/>
    <property type="evidence" value="ECO:0007669"/>
    <property type="project" value="UniProtKB-UniPathway"/>
</dbReference>
<dbReference type="CDD" id="cd01172">
    <property type="entry name" value="RfaE_like"/>
    <property type="match status" value="1"/>
</dbReference>
<dbReference type="FunFam" id="3.40.1190.20:FF:000002">
    <property type="entry name" value="Bifunctional protein HldE"/>
    <property type="match status" value="1"/>
</dbReference>
<dbReference type="FunFam" id="3.40.50.620:FF:000028">
    <property type="entry name" value="Bifunctional protein HldE"/>
    <property type="match status" value="1"/>
</dbReference>
<dbReference type="Gene3D" id="3.40.1190.20">
    <property type="match status" value="1"/>
</dbReference>
<dbReference type="Gene3D" id="3.40.50.620">
    <property type="entry name" value="HUPs"/>
    <property type="match status" value="1"/>
</dbReference>
<dbReference type="HAMAP" id="MF_01603">
    <property type="entry name" value="HldE"/>
    <property type="match status" value="1"/>
</dbReference>
<dbReference type="InterPro" id="IPR023030">
    <property type="entry name" value="Bifunc_HldE"/>
</dbReference>
<dbReference type="InterPro" id="IPR004821">
    <property type="entry name" value="Cyt_trans-like"/>
</dbReference>
<dbReference type="InterPro" id="IPR011611">
    <property type="entry name" value="PfkB_dom"/>
</dbReference>
<dbReference type="InterPro" id="IPR011913">
    <property type="entry name" value="RfaE_dom_I"/>
</dbReference>
<dbReference type="InterPro" id="IPR011914">
    <property type="entry name" value="RfaE_dom_II"/>
</dbReference>
<dbReference type="InterPro" id="IPR029056">
    <property type="entry name" value="Ribokinase-like"/>
</dbReference>
<dbReference type="InterPro" id="IPR014729">
    <property type="entry name" value="Rossmann-like_a/b/a_fold"/>
</dbReference>
<dbReference type="NCBIfam" id="TIGR00125">
    <property type="entry name" value="cyt_tran_rel"/>
    <property type="match status" value="1"/>
</dbReference>
<dbReference type="NCBIfam" id="NF008454">
    <property type="entry name" value="PRK11316.1"/>
    <property type="match status" value="1"/>
</dbReference>
<dbReference type="NCBIfam" id="TIGR02198">
    <property type="entry name" value="rfaE_dom_I"/>
    <property type="match status" value="1"/>
</dbReference>
<dbReference type="NCBIfam" id="TIGR02199">
    <property type="entry name" value="rfaE_dom_II"/>
    <property type="match status" value="1"/>
</dbReference>
<dbReference type="PANTHER" id="PTHR46969">
    <property type="entry name" value="BIFUNCTIONAL PROTEIN HLDE"/>
    <property type="match status" value="1"/>
</dbReference>
<dbReference type="PANTHER" id="PTHR46969:SF1">
    <property type="entry name" value="BIFUNCTIONAL PROTEIN HLDE"/>
    <property type="match status" value="1"/>
</dbReference>
<dbReference type="Pfam" id="PF01467">
    <property type="entry name" value="CTP_transf_like"/>
    <property type="match status" value="1"/>
</dbReference>
<dbReference type="Pfam" id="PF00294">
    <property type="entry name" value="PfkB"/>
    <property type="match status" value="1"/>
</dbReference>
<dbReference type="SUPFAM" id="SSF52374">
    <property type="entry name" value="Nucleotidylyl transferase"/>
    <property type="match status" value="1"/>
</dbReference>
<dbReference type="SUPFAM" id="SSF53613">
    <property type="entry name" value="Ribokinase-like"/>
    <property type="match status" value="1"/>
</dbReference>
<accession>A6VP06</accession>
<evidence type="ECO:0000255" key="1">
    <source>
        <dbReference type="HAMAP-Rule" id="MF_01603"/>
    </source>
</evidence>
<feature type="chain" id="PRO_1000073624" description="Bifunctional protein HldE">
    <location>
        <begin position="1"/>
        <end position="476"/>
    </location>
</feature>
<feature type="region of interest" description="Ribokinase">
    <location>
        <begin position="1"/>
        <end position="319"/>
    </location>
</feature>
<feature type="region of interest" description="Cytidylyltransferase">
    <location>
        <begin position="344"/>
        <end position="476"/>
    </location>
</feature>
<feature type="active site" evidence="1">
    <location>
        <position position="264"/>
    </location>
</feature>
<feature type="binding site" evidence="1">
    <location>
        <begin position="195"/>
        <end position="198"/>
    </location>
    <ligand>
        <name>ATP</name>
        <dbReference type="ChEBI" id="CHEBI:30616"/>
    </ligand>
</feature>
<comment type="function">
    <text evidence="1">Catalyzes the phosphorylation of D-glycero-D-manno-heptose 7-phosphate at the C-1 position to selectively form D-glycero-beta-D-manno-heptose-1,7-bisphosphate.</text>
</comment>
<comment type="function">
    <text evidence="1">Catalyzes the ADP transfer from ATP to D-glycero-beta-D-manno-heptose 1-phosphate, yielding ADP-D-glycero-beta-D-manno-heptose.</text>
</comment>
<comment type="catalytic activity">
    <reaction evidence="1">
        <text>D-glycero-beta-D-manno-heptose 7-phosphate + ATP = D-glycero-beta-D-manno-heptose 1,7-bisphosphate + ADP + H(+)</text>
        <dbReference type="Rhea" id="RHEA:27473"/>
        <dbReference type="ChEBI" id="CHEBI:15378"/>
        <dbReference type="ChEBI" id="CHEBI:30616"/>
        <dbReference type="ChEBI" id="CHEBI:60204"/>
        <dbReference type="ChEBI" id="CHEBI:60208"/>
        <dbReference type="ChEBI" id="CHEBI:456216"/>
        <dbReference type="EC" id="2.7.1.167"/>
    </reaction>
</comment>
<comment type="catalytic activity">
    <reaction evidence="1">
        <text>D-glycero-beta-D-manno-heptose 1-phosphate + ATP + H(+) = ADP-D-glycero-beta-D-manno-heptose + diphosphate</text>
        <dbReference type="Rhea" id="RHEA:27465"/>
        <dbReference type="ChEBI" id="CHEBI:15378"/>
        <dbReference type="ChEBI" id="CHEBI:30616"/>
        <dbReference type="ChEBI" id="CHEBI:33019"/>
        <dbReference type="ChEBI" id="CHEBI:59967"/>
        <dbReference type="ChEBI" id="CHEBI:61593"/>
        <dbReference type="EC" id="2.7.7.70"/>
    </reaction>
</comment>
<comment type="pathway">
    <text evidence="1">Nucleotide-sugar biosynthesis; ADP-L-glycero-beta-D-manno-heptose biosynthesis; ADP-L-glycero-beta-D-manno-heptose from D-glycero-beta-D-manno-heptose 7-phosphate: step 1/4.</text>
</comment>
<comment type="pathway">
    <text evidence="1">Nucleotide-sugar biosynthesis; ADP-L-glycero-beta-D-manno-heptose biosynthesis; ADP-L-glycero-beta-D-manno-heptose from D-glycero-beta-D-manno-heptose 7-phosphate: step 3/4.</text>
</comment>
<comment type="subunit">
    <text evidence="1">Homodimer.</text>
</comment>
<comment type="similarity">
    <text evidence="1">In the N-terminal section; belongs to the carbohydrate kinase PfkB family.</text>
</comment>
<comment type="similarity">
    <text evidence="1">In the C-terminal section; belongs to the cytidylyltransferase family.</text>
</comment>
<proteinExistence type="inferred from homology"/>
<reference key="1">
    <citation type="journal article" date="2010" name="BMC Genomics">
        <title>A genomic perspective on the potential of Actinobacillus succinogenes for industrial succinate production.</title>
        <authorList>
            <person name="McKinlay J.B."/>
            <person name="Laivenieks M."/>
            <person name="Schindler B.D."/>
            <person name="McKinlay A.A."/>
            <person name="Siddaramappa S."/>
            <person name="Challacombe J.F."/>
            <person name="Lowry S.R."/>
            <person name="Clum A."/>
            <person name="Lapidus A.L."/>
            <person name="Burkhart K.B."/>
            <person name="Harkins V."/>
            <person name="Vieille C."/>
        </authorList>
    </citation>
    <scope>NUCLEOTIDE SEQUENCE [LARGE SCALE GENOMIC DNA]</scope>
    <source>
        <strain>ATCC 55618 / DSM 22257 / CCUG 43843 / 130Z</strain>
    </source>
</reference>
<keyword id="KW-0067">ATP-binding</keyword>
<keyword id="KW-0119">Carbohydrate metabolism</keyword>
<keyword id="KW-0418">Kinase</keyword>
<keyword id="KW-0511">Multifunctional enzyme</keyword>
<keyword id="KW-0547">Nucleotide-binding</keyword>
<keyword id="KW-0548">Nucleotidyltransferase</keyword>
<keyword id="KW-1185">Reference proteome</keyword>
<keyword id="KW-0808">Transferase</keyword>
<name>HLDE_ACTSZ</name>
<protein>
    <recommendedName>
        <fullName evidence="1">Bifunctional protein HldE</fullName>
    </recommendedName>
    <domain>
        <recommendedName>
            <fullName evidence="1">D-beta-D-heptose 7-phosphate kinase</fullName>
            <ecNumber evidence="1">2.7.1.167</ecNumber>
        </recommendedName>
        <alternativeName>
            <fullName evidence="1">D-beta-D-heptose 7-phosphotransferase</fullName>
        </alternativeName>
        <alternativeName>
            <fullName evidence="1">D-glycero-beta-D-manno-heptose-7-phosphate kinase</fullName>
        </alternativeName>
    </domain>
    <domain>
        <recommendedName>
            <fullName evidence="1">D-beta-D-heptose 1-phosphate adenylyltransferase</fullName>
            <ecNumber evidence="1">2.7.7.70</ecNumber>
        </recommendedName>
        <alternativeName>
            <fullName evidence="1">D-glycero-beta-D-manno-heptose 1-phosphate adenylyltransferase</fullName>
        </alternativeName>
    </domain>
</protein>
<gene>
    <name evidence="1" type="primary">hldE</name>
    <name type="ordered locus">Asuc_1343</name>
</gene>
<sequence>MAQYSAQFPHAKVLVLGDVMLDRYWFGATNRISPEAPVPVVRVKKHEERAGGAANVAMNIASLNVPVRLLGLTGDDEAGNALTGLLEKQKICCDFVKLSSHPTITKLRILSRHQQLLRLDFEENFNNVHSDNLLTKLESAVKNVGALILSDYGKGTLNDVQHMIRIARQAKVPVLIDPKGTDFERYRGATLLTPNMSEFEAVAGVCQSDEDIVEKGLKMIADYDLTALLITRSEKGMTLLRPNQPAFHLPTEAKEVYDVTGAGDTVISVLATALADGRTVEEACYLANVAAGIVVGKLGTSAVSTVELENAIHGRTVSGFGIMTENELKNAVKLAKERGEKIVMTNGCFDILHPGHVSYLENARKLGDRLIVAVNTDESVKRLKGETRPINDLASRMAVLAGLSSVDWLVAFDEDTPQRLIGEILPDLLVKGGDYKPEEIAGSKEVWANGGDVSVLNFENGCSTSNVIKKIRDLKD</sequence>